<sequence length="414" mass="45455">MSGIIATYLIHDDSHNLEKKAEQIALGLTIGSWTHLPHLLQEQLKQHKGNVIHVEELAEHEHTNSYLRKKVKRGIIKIEYPLLNFSPDLPAILTTTFGKLSLDGEVKLIDLTFSDELKKHFPGPKFGIDGIRNLLQVHDRPLLMSIFKGMIGRNIGYLKTQLRDQAIGGVDIVKDDEILFENALTPLTKRIVSGKEVLQSVYETYGHKTLYAVNLTGRTFDLKENAKRAVQAGADILLFNVFSYGLDVLQSLAEDDEIPVPIMAHPAVSGAYSASKLYGVSSPLLLGKLLRYAGADFSLFPSPYGSVALEKEEALAISKYLTEDDAFFKKSFSVPSAGIHPGFVPFIARDFGKDVVINAGGGIHGHPNGAQGGGKAFRAAIDATLQNKPLHEVDDINLHSALQIWGNPSHEVKL</sequence>
<evidence type="ECO:0000255" key="1">
    <source>
        <dbReference type="HAMAP-Rule" id="MF_01679"/>
    </source>
</evidence>
<comment type="function">
    <text evidence="1">Catalyzes the enolization of 2,3-diketo-5-methylthiopentyl-1-phosphate (DK-MTP-1-P) into 2-hydroxy-3-keto-5-methylthiopentenyl-1-phosphate (HK-MTPenyl-1-P).</text>
</comment>
<comment type="catalytic activity">
    <reaction evidence="1">
        <text>5-methylsulfanyl-2,3-dioxopentyl phosphate = 2-hydroxy-5-methylsulfanyl-3-oxopent-1-enyl phosphate</text>
        <dbReference type="Rhea" id="RHEA:18769"/>
        <dbReference type="ChEBI" id="CHEBI:58828"/>
        <dbReference type="ChEBI" id="CHEBI:59505"/>
        <dbReference type="EC" id="5.3.2.5"/>
    </reaction>
</comment>
<comment type="cofactor">
    <cofactor evidence="1">
        <name>Mg(2+)</name>
        <dbReference type="ChEBI" id="CHEBI:18420"/>
    </cofactor>
    <text evidence="1">Binds 1 Mg(2+) ion per subunit.</text>
</comment>
<comment type="pathway">
    <text evidence="1">Amino-acid biosynthesis; L-methionine biosynthesis via salvage pathway; L-methionine from S-methyl-5-thio-alpha-D-ribose 1-phosphate: step 3/6.</text>
</comment>
<comment type="subunit">
    <text evidence="1">Homodimer.</text>
</comment>
<comment type="miscellaneous">
    <text evidence="1">Has no RuBP-carboxylation activity.</text>
</comment>
<comment type="similarity">
    <text evidence="1">Belongs to the RuBisCO large chain family. Type IV subfamily.</text>
</comment>
<accession>B9IWP9</accession>
<keyword id="KW-0028">Amino-acid biosynthesis</keyword>
<keyword id="KW-0413">Isomerase</keyword>
<keyword id="KW-0460">Magnesium</keyword>
<keyword id="KW-0479">Metal-binding</keyword>
<keyword id="KW-0486">Methionine biosynthesis</keyword>
<protein>
    <recommendedName>
        <fullName evidence="1">2,3-diketo-5-methylthiopentyl-1-phosphate enolase</fullName>
        <shortName evidence="1">DK-MTP-1-P enolase</shortName>
        <ecNumber evidence="1">5.3.2.5</ecNumber>
    </recommendedName>
    <alternativeName>
        <fullName evidence="1">RuBisCO-like protein</fullName>
        <shortName evidence="1">RLP</shortName>
    </alternativeName>
</protein>
<name>MTNW_BACCQ</name>
<proteinExistence type="inferred from homology"/>
<reference key="1">
    <citation type="journal article" date="2009" name="J. Bacteriol.">
        <title>Complete genome sequence of the extremophilic Bacillus cereus strain Q1 with industrial applications.</title>
        <authorList>
            <person name="Xiong Z."/>
            <person name="Jiang Y."/>
            <person name="Qi D."/>
            <person name="Lu H."/>
            <person name="Yang F."/>
            <person name="Yang J."/>
            <person name="Chen L."/>
            <person name="Sun L."/>
            <person name="Xu X."/>
            <person name="Xue Y."/>
            <person name="Zhu Y."/>
            <person name="Jin Q."/>
        </authorList>
    </citation>
    <scope>NUCLEOTIDE SEQUENCE [LARGE SCALE GENOMIC DNA]</scope>
    <source>
        <strain>Q1</strain>
    </source>
</reference>
<dbReference type="EC" id="5.3.2.5" evidence="1"/>
<dbReference type="EMBL" id="CP000227">
    <property type="protein sequence ID" value="ACM14254.1"/>
    <property type="molecule type" value="Genomic_DNA"/>
</dbReference>
<dbReference type="SMR" id="B9IWP9"/>
<dbReference type="KEGG" id="bcq:BCQ_3826"/>
<dbReference type="HOGENOM" id="CLU_031450_3_1_9"/>
<dbReference type="UniPathway" id="UPA00904">
    <property type="reaction ID" value="UER00876"/>
</dbReference>
<dbReference type="Proteomes" id="UP000000441">
    <property type="component" value="Chromosome"/>
</dbReference>
<dbReference type="GO" id="GO:0043715">
    <property type="term" value="F:2,3-diketo-5-methylthiopentyl-1-phosphate enolase activity"/>
    <property type="evidence" value="ECO:0007669"/>
    <property type="project" value="UniProtKB-UniRule"/>
</dbReference>
<dbReference type="GO" id="GO:0000287">
    <property type="term" value="F:magnesium ion binding"/>
    <property type="evidence" value="ECO:0007669"/>
    <property type="project" value="UniProtKB-UniRule"/>
</dbReference>
<dbReference type="GO" id="GO:0016984">
    <property type="term" value="F:ribulose-bisphosphate carboxylase activity"/>
    <property type="evidence" value="ECO:0007669"/>
    <property type="project" value="InterPro"/>
</dbReference>
<dbReference type="GO" id="GO:0015977">
    <property type="term" value="P:carbon fixation"/>
    <property type="evidence" value="ECO:0007669"/>
    <property type="project" value="InterPro"/>
</dbReference>
<dbReference type="GO" id="GO:0019509">
    <property type="term" value="P:L-methionine salvage from methylthioadenosine"/>
    <property type="evidence" value="ECO:0007669"/>
    <property type="project" value="UniProtKB-UniRule"/>
</dbReference>
<dbReference type="CDD" id="cd08209">
    <property type="entry name" value="RLP_DK-MTP-1-P-enolase"/>
    <property type="match status" value="1"/>
</dbReference>
<dbReference type="FunFam" id="3.20.20.110:FF:000002">
    <property type="entry name" value="2,3-diketo-5-methylthiopentyl-1-phosphate enolase"/>
    <property type="match status" value="1"/>
</dbReference>
<dbReference type="Gene3D" id="3.20.20.110">
    <property type="entry name" value="Ribulose bisphosphate carboxylase, large subunit, C-terminal domain"/>
    <property type="match status" value="1"/>
</dbReference>
<dbReference type="Gene3D" id="3.30.70.150">
    <property type="entry name" value="RuBisCO large subunit, N-terminal domain"/>
    <property type="match status" value="1"/>
</dbReference>
<dbReference type="HAMAP" id="MF_01679">
    <property type="entry name" value="Salvage_MtnW"/>
    <property type="match status" value="1"/>
</dbReference>
<dbReference type="InterPro" id="IPR017717">
    <property type="entry name" value="Diketo-Methiopentyl-P_enolase"/>
</dbReference>
<dbReference type="InterPro" id="IPR033966">
    <property type="entry name" value="RuBisCO"/>
</dbReference>
<dbReference type="InterPro" id="IPR000685">
    <property type="entry name" value="RuBisCO_lsu_C"/>
</dbReference>
<dbReference type="InterPro" id="IPR036376">
    <property type="entry name" value="RuBisCO_lsu_C_sf"/>
</dbReference>
<dbReference type="InterPro" id="IPR017443">
    <property type="entry name" value="RuBisCO_lsu_fd_N"/>
</dbReference>
<dbReference type="InterPro" id="IPR036422">
    <property type="entry name" value="RuBisCO_lsu_N_sf"/>
</dbReference>
<dbReference type="NCBIfam" id="NF007095">
    <property type="entry name" value="PRK09549.1"/>
    <property type="match status" value="1"/>
</dbReference>
<dbReference type="NCBIfam" id="TIGR03332">
    <property type="entry name" value="salvage_mtnW"/>
    <property type="match status" value="1"/>
</dbReference>
<dbReference type="PANTHER" id="PTHR42704">
    <property type="entry name" value="RIBULOSE BISPHOSPHATE CARBOXYLASE"/>
    <property type="match status" value="1"/>
</dbReference>
<dbReference type="PANTHER" id="PTHR42704:SF17">
    <property type="entry name" value="RIBULOSE BISPHOSPHATE CARBOXYLASE LARGE CHAIN"/>
    <property type="match status" value="1"/>
</dbReference>
<dbReference type="Pfam" id="PF00016">
    <property type="entry name" value="RuBisCO_large"/>
    <property type="match status" value="1"/>
</dbReference>
<dbReference type="Pfam" id="PF02788">
    <property type="entry name" value="RuBisCO_large_N"/>
    <property type="match status" value="1"/>
</dbReference>
<dbReference type="SFLD" id="SFLDF00157">
    <property type="entry name" value="2_3-diketo-5-methylthiopentyl"/>
    <property type="match status" value="1"/>
</dbReference>
<dbReference type="SFLD" id="SFLDS00014">
    <property type="entry name" value="RuBisCO"/>
    <property type="match status" value="1"/>
</dbReference>
<dbReference type="SUPFAM" id="SSF51649">
    <property type="entry name" value="RuBisCo, C-terminal domain"/>
    <property type="match status" value="1"/>
</dbReference>
<dbReference type="SUPFAM" id="SSF54966">
    <property type="entry name" value="RuBisCO, large subunit, small (N-terminal) domain"/>
    <property type="match status" value="1"/>
</dbReference>
<gene>
    <name evidence="1" type="primary">mtnW</name>
    <name type="ordered locus">BCQ_3826</name>
</gene>
<organism>
    <name type="scientific">Bacillus cereus (strain Q1)</name>
    <dbReference type="NCBI Taxonomy" id="361100"/>
    <lineage>
        <taxon>Bacteria</taxon>
        <taxon>Bacillati</taxon>
        <taxon>Bacillota</taxon>
        <taxon>Bacilli</taxon>
        <taxon>Bacillales</taxon>
        <taxon>Bacillaceae</taxon>
        <taxon>Bacillus</taxon>
        <taxon>Bacillus cereus group</taxon>
    </lineage>
</organism>
<feature type="chain" id="PRO_1000187380" description="2,3-diketo-5-methylthiopentyl-1-phosphate enolase">
    <location>
        <begin position="1"/>
        <end position="414"/>
    </location>
</feature>
<feature type="active site" description="Proton acceptor" evidence="1">
    <location>
        <position position="99"/>
    </location>
</feature>
<feature type="binding site" evidence="1">
    <location>
        <position position="148"/>
    </location>
    <ligand>
        <name>substrate</name>
    </ligand>
</feature>
<feature type="binding site" evidence="1">
    <location>
        <begin position="174"/>
        <end position="177"/>
    </location>
    <ligand>
        <name>substrate</name>
    </ligand>
</feature>
<feature type="binding site" description="via carbamate group" evidence="1">
    <location>
        <position position="174"/>
    </location>
    <ligand>
        <name>Mg(2+)</name>
        <dbReference type="ChEBI" id="CHEBI:18420"/>
    </ligand>
</feature>
<feature type="binding site" evidence="1">
    <location>
        <position position="176"/>
    </location>
    <ligand>
        <name>Mg(2+)</name>
        <dbReference type="ChEBI" id="CHEBI:18420"/>
    </ligand>
</feature>
<feature type="binding site" evidence="1">
    <location>
        <position position="177"/>
    </location>
    <ligand>
        <name>Mg(2+)</name>
        <dbReference type="ChEBI" id="CHEBI:18420"/>
    </ligand>
</feature>
<feature type="binding site" evidence="1">
    <location>
        <position position="265"/>
    </location>
    <ligand>
        <name>substrate</name>
    </ligand>
</feature>
<feature type="binding site" evidence="1">
    <location>
        <position position="338"/>
    </location>
    <ligand>
        <name>substrate</name>
    </ligand>
</feature>
<feature type="binding site" evidence="1">
    <location>
        <begin position="360"/>
        <end position="361"/>
    </location>
    <ligand>
        <name>substrate</name>
    </ligand>
</feature>
<feature type="modified residue" description="N6-carboxylysine" evidence="1">
    <location>
        <position position="174"/>
    </location>
</feature>